<dbReference type="EMBL" id="AY327106">
    <property type="protein sequence ID" value="AAQ24031.1"/>
    <property type="molecule type" value="mRNA"/>
</dbReference>
<dbReference type="SMR" id="Q6VU70"/>
<dbReference type="GO" id="GO:0005576">
    <property type="term" value="C:extracellular region"/>
    <property type="evidence" value="ECO:0007669"/>
    <property type="project" value="UniProtKB-SubCell"/>
</dbReference>
<dbReference type="GO" id="GO:0008289">
    <property type="term" value="F:lipid binding"/>
    <property type="evidence" value="ECO:0007669"/>
    <property type="project" value="InterPro"/>
</dbReference>
<dbReference type="GO" id="GO:0006869">
    <property type="term" value="P:lipid transport"/>
    <property type="evidence" value="ECO:0007669"/>
    <property type="project" value="UniProtKB-KW"/>
</dbReference>
<dbReference type="Gene3D" id="1.20.120.20">
    <property type="entry name" value="Apolipoprotein"/>
    <property type="match status" value="1"/>
</dbReference>
<dbReference type="InterPro" id="IPR010009">
    <property type="entry name" value="ApoLp-III"/>
</dbReference>
<dbReference type="Pfam" id="PF07464">
    <property type="entry name" value="ApoLp-III"/>
    <property type="match status" value="1"/>
</dbReference>
<dbReference type="SUPFAM" id="SSF47857">
    <property type="entry name" value="Apolipophorin-III"/>
    <property type="match status" value="1"/>
</dbReference>
<comment type="function">
    <text evidence="1">Assists in the loading of diacylglycerol, generated from triacylglycerol stores in the fat body through the action of adipokinetic hormone, into lipophorin, the hemolymph lipoprotein. It increases the lipid carrying capacity of lipophorin by covering the expanding hydrophobic surface resulting from diacylglycerol uptake. It thus plays a critical role in the transport of lipids during flight in several species of insects (By similarity).</text>
</comment>
<comment type="subunit">
    <text evidence="1">Equilibrium between a soluble monomer and a bound lipoprotein form. Apolipophorin-3 associates with lipophorin during lipid loading until each particle contains 9 or 14 molecules of apolipophorin-3 (By similarity).</text>
</comment>
<comment type="subcellular location">
    <subcellularLocation>
        <location evidence="1">Secreted</location>
    </subcellularLocation>
</comment>
<comment type="tissue specificity">
    <text>Hemolymph.</text>
</comment>
<comment type="similarity">
    <text evidence="3">Belongs to the insect apolipophorin-3 family.</text>
</comment>
<comment type="online information" name="Protein Spotlight">
    <link uri="https://www.proteinspotlight.org/back_issues/059"/>
    <text>Lipid freight - Issue 59 of June 2005</text>
</comment>
<sequence length="187" mass="20746">MAAKFIILLALFALSQASVVRRDAPLANFLQDLEKRAADIQKTFSEQFQAISNSKNVQDVNKAVKESSDVVLKQLSTLSSSLQSALTDANGKAKEALEQTRQNLEKTAEELRRAHPDVEKQANQLRDKLQAAVQSTLQETQKLAKEVAANMEQTNEKLAPKIKEAFEDFVKQAEAVQKKVHDAATKQ</sequence>
<evidence type="ECO:0000250" key="1"/>
<evidence type="ECO:0000255" key="2"/>
<evidence type="ECO:0000305" key="3"/>
<feature type="signal peptide" evidence="2">
    <location>
        <begin position="1"/>
        <end position="17"/>
    </location>
</feature>
<feature type="propeptide" id="PRO_0000002044" evidence="2">
    <location>
        <begin position="18"/>
        <end position="22"/>
    </location>
</feature>
<feature type="chain" id="PRO_0000002045" description="Apolipophorin-3">
    <location>
        <begin position="23"/>
        <end position="187"/>
    </location>
</feature>
<accession>Q6VU70</accession>
<protein>
    <recommendedName>
        <fullName>Apolipophorin-3</fullName>
    </recommendedName>
    <alternativeName>
        <fullName>Apolipophorin-III</fullName>
        <shortName>ApoLp-III</shortName>
    </alternativeName>
</protein>
<reference key="1">
    <citation type="journal article" date="2004" name="Insect Biochem. Mol. Biol.">
        <title>Immune activation of apolipophorin-III and its distribution in hemocyte from Hyphantria cunea.</title>
        <authorList>
            <person name="Kim H.-J."/>
            <person name="Je H.-J."/>
            <person name="Park S.-Y."/>
            <person name="Lee I.-H."/>
            <person name="Jin B.-R."/>
            <person name="Yun H.-K."/>
            <person name="Yun C.-Y."/>
            <person name="Han Y.-S."/>
            <person name="Kang Y.-J."/>
            <person name="Seo S.-J."/>
        </authorList>
    </citation>
    <scope>NUCLEOTIDE SEQUENCE [MRNA]</scope>
</reference>
<name>APL3_HYPCU</name>
<proteinExistence type="evidence at transcript level"/>
<organism>
    <name type="scientific">Hyphantria cunea</name>
    <name type="common">Fall webworm moth</name>
    <name type="synonym">Phalaena cunea</name>
    <dbReference type="NCBI Taxonomy" id="39466"/>
    <lineage>
        <taxon>Eukaryota</taxon>
        <taxon>Metazoa</taxon>
        <taxon>Ecdysozoa</taxon>
        <taxon>Arthropoda</taxon>
        <taxon>Hexapoda</taxon>
        <taxon>Insecta</taxon>
        <taxon>Pterygota</taxon>
        <taxon>Neoptera</taxon>
        <taxon>Endopterygota</taxon>
        <taxon>Lepidoptera</taxon>
        <taxon>Glossata</taxon>
        <taxon>Ditrysia</taxon>
        <taxon>Noctuoidea</taxon>
        <taxon>Erebidae</taxon>
        <taxon>Arctiinae</taxon>
        <taxon>Hyphantria</taxon>
    </lineage>
</organism>
<keyword id="KW-0165">Cleavage on pair of basic residues</keyword>
<keyword id="KW-0445">Lipid transport</keyword>
<keyword id="KW-0964">Secreted</keyword>
<keyword id="KW-0732">Signal</keyword>
<keyword id="KW-0813">Transport</keyword>